<feature type="chain" id="PRO_0000312867" description="Zinc transporter ZIP3">
    <location>
        <begin position="1"/>
        <end position="314"/>
    </location>
</feature>
<feature type="topological domain" description="Extracellular" evidence="4">
    <location>
        <begin position="1"/>
        <end position="3"/>
    </location>
</feature>
<feature type="transmembrane region" description="Helical" evidence="4">
    <location>
        <begin position="4"/>
        <end position="24"/>
    </location>
</feature>
<feature type="topological domain" description="Cytoplasmic" evidence="4">
    <location>
        <begin position="25"/>
        <end position="42"/>
    </location>
</feature>
<feature type="transmembrane region" description="Helical" evidence="4">
    <location>
        <begin position="43"/>
        <end position="63"/>
    </location>
</feature>
<feature type="topological domain" description="Extracellular" evidence="4">
    <location>
        <begin position="64"/>
        <end position="85"/>
    </location>
</feature>
<feature type="transmembrane region" description="Helical" evidence="4">
    <location>
        <begin position="86"/>
        <end position="106"/>
    </location>
</feature>
<feature type="topological domain" description="Cytoplasmic" evidence="4">
    <location>
        <begin position="107"/>
        <end position="169"/>
    </location>
</feature>
<feature type="transmembrane region" description="Helical" evidence="4">
    <location>
        <begin position="170"/>
        <end position="190"/>
    </location>
</feature>
<feature type="topological domain" description="Extracellular" evidence="4">
    <location>
        <begin position="191"/>
        <end position="196"/>
    </location>
</feature>
<feature type="transmembrane region" description="Helical" evidence="4">
    <location>
        <begin position="197"/>
        <end position="217"/>
    </location>
</feature>
<feature type="topological domain" description="Cytoplasmic" evidence="4">
    <location>
        <begin position="218"/>
        <end position="229"/>
    </location>
</feature>
<feature type="transmembrane region" description="Helical" evidence="4">
    <location>
        <begin position="230"/>
        <end position="250"/>
    </location>
</feature>
<feature type="topological domain" description="Extracellular" evidence="4">
    <location>
        <begin position="251"/>
        <end position="262"/>
    </location>
</feature>
<feature type="transmembrane region" description="Helical" evidence="4">
    <location>
        <begin position="263"/>
        <end position="283"/>
    </location>
</feature>
<feature type="topological domain" description="Cytoplasmic" evidence="4">
    <location>
        <begin position="284"/>
        <end position="292"/>
    </location>
</feature>
<feature type="transmembrane region" description="Helical" evidence="4">
    <location>
        <begin position="293"/>
        <end position="313"/>
    </location>
</feature>
<feature type="topological domain" description="Extracellular" evidence="4">
    <location>
        <position position="314"/>
    </location>
</feature>
<feature type="modified residue" description="Phosphoserine" evidence="3">
    <location>
        <position position="125"/>
    </location>
</feature>
<feature type="modified residue" description="Phosphoserine" evidence="1">
    <location>
        <position position="129"/>
    </location>
</feature>
<feature type="sequence conflict" description="In Ref. 1; AAX08735/AAX09077." evidence="5" ref="1">
    <original>D</original>
    <variation>E</variation>
    <location>
        <position position="251"/>
    </location>
</feature>
<accession>Q5E960</accession>
<accession>A0A3Q1LWM2</accession>
<accession>Q0IIM7</accession>
<sequence length="314" mass="33991">MVKLLVAKILCMVGMFFFMLLGSLLPVKIIEMDFEKAHRSKKILSLCNTFGGGVFLATCFNALLPAVREKLKEVLTLAHISTDYPLAETIMLLGFFMTVFLEQLVLTFRKERPAFIDLETFNASSDAGSDSEYESPFMGGPRGHALYAEPHGHSHGLSVQELSRSSPLRLLSLVFALSAHSVFEGLALGLQEEGEKVVSLFVGVAIHETLVAVALGINMARSAMALRDAAKLAVTVSAMIPLGISLGLGIDSAQGMPSSVASVLLQGLAGGTFLFVTFFEILAKELEEKSDRLLKVLFLVLGYTVLAGMVFIKW</sequence>
<dbReference type="EMBL" id="BT020718">
    <property type="protein sequence ID" value="AAX08735.1"/>
    <property type="molecule type" value="mRNA"/>
</dbReference>
<dbReference type="EMBL" id="BT021060">
    <property type="protein sequence ID" value="AAX09077.1"/>
    <property type="molecule type" value="mRNA"/>
</dbReference>
<dbReference type="EMBL" id="NKLS02000007">
    <property type="status" value="NOT_ANNOTATED_CDS"/>
    <property type="molecule type" value="Genomic_DNA"/>
</dbReference>
<dbReference type="EMBL" id="BC122570">
    <property type="protein sequence ID" value="AAI22571.1"/>
    <property type="molecule type" value="mRNA"/>
</dbReference>
<dbReference type="RefSeq" id="NP_001015521.1">
    <property type="nucleotide sequence ID" value="NM_001015521.1"/>
</dbReference>
<dbReference type="RefSeq" id="XP_005209063.2">
    <property type="nucleotide sequence ID" value="XM_005209006.5"/>
</dbReference>
<dbReference type="SMR" id="Q5E960"/>
<dbReference type="FunCoup" id="Q5E960">
    <property type="interactions" value="2689"/>
</dbReference>
<dbReference type="STRING" id="9913.ENSBTAP00000061642"/>
<dbReference type="PaxDb" id="9913-ENSBTAP00000023551"/>
<dbReference type="GeneID" id="505294"/>
<dbReference type="KEGG" id="bta:505294"/>
<dbReference type="CTD" id="29985"/>
<dbReference type="VEuPathDB" id="HostDB:ENSBTAG00000017706"/>
<dbReference type="eggNOG" id="KOG1558">
    <property type="taxonomic scope" value="Eukaryota"/>
</dbReference>
<dbReference type="HOGENOM" id="CLU_040462_4_1_1"/>
<dbReference type="InParanoid" id="Q5E960"/>
<dbReference type="OMA" id="HHHGHFN"/>
<dbReference type="OrthoDB" id="448280at2759"/>
<dbReference type="TreeFam" id="TF317098"/>
<dbReference type="Reactome" id="R-BTA-442380">
    <property type="pathway name" value="Zinc influx into cells by the SLC39 gene family"/>
</dbReference>
<dbReference type="Proteomes" id="UP000009136">
    <property type="component" value="Chromosome 7"/>
</dbReference>
<dbReference type="Bgee" id="ENSBTAG00000017706">
    <property type="expression patterns" value="Expressed in retina and 105 other cell types or tissues"/>
</dbReference>
<dbReference type="GO" id="GO:0016324">
    <property type="term" value="C:apical plasma membrane"/>
    <property type="evidence" value="ECO:0007669"/>
    <property type="project" value="UniProtKB-SubCell"/>
</dbReference>
<dbReference type="GO" id="GO:0098686">
    <property type="term" value="C:hippocampal mossy fiber to CA3 synapse"/>
    <property type="evidence" value="ECO:0000250"/>
    <property type="project" value="UniProtKB"/>
</dbReference>
<dbReference type="GO" id="GO:0005886">
    <property type="term" value="C:plasma membrane"/>
    <property type="evidence" value="ECO:0000250"/>
    <property type="project" value="UniProtKB"/>
</dbReference>
<dbReference type="GO" id="GO:0005385">
    <property type="term" value="F:zinc ion transmembrane transporter activity"/>
    <property type="evidence" value="ECO:0000250"/>
    <property type="project" value="UniProtKB"/>
</dbReference>
<dbReference type="GO" id="GO:0000902">
    <property type="term" value="P:cell morphogenesis"/>
    <property type="evidence" value="ECO:0007669"/>
    <property type="project" value="Ensembl"/>
</dbReference>
<dbReference type="GO" id="GO:0048701">
    <property type="term" value="P:embryonic cranial skeleton morphogenesis"/>
    <property type="evidence" value="ECO:0007669"/>
    <property type="project" value="Ensembl"/>
</dbReference>
<dbReference type="GO" id="GO:0001701">
    <property type="term" value="P:in utero embryonic development"/>
    <property type="evidence" value="ECO:0007669"/>
    <property type="project" value="Ensembl"/>
</dbReference>
<dbReference type="GO" id="GO:0060173">
    <property type="term" value="P:limb development"/>
    <property type="evidence" value="ECO:0007669"/>
    <property type="project" value="Ensembl"/>
</dbReference>
<dbReference type="GO" id="GO:0043029">
    <property type="term" value="P:T cell homeostasis"/>
    <property type="evidence" value="ECO:0007669"/>
    <property type="project" value="Ensembl"/>
</dbReference>
<dbReference type="GO" id="GO:0071577">
    <property type="term" value="P:zinc ion transmembrane transport"/>
    <property type="evidence" value="ECO:0000250"/>
    <property type="project" value="UniProtKB"/>
</dbReference>
<dbReference type="InterPro" id="IPR003689">
    <property type="entry name" value="ZIP"/>
</dbReference>
<dbReference type="PANTHER" id="PTHR11040:SF221">
    <property type="entry name" value="ZINC TRANSPORTER ZIP3"/>
    <property type="match status" value="1"/>
</dbReference>
<dbReference type="PANTHER" id="PTHR11040">
    <property type="entry name" value="ZINC/IRON TRANSPORTER"/>
    <property type="match status" value="1"/>
</dbReference>
<dbReference type="Pfam" id="PF02535">
    <property type="entry name" value="Zip"/>
    <property type="match status" value="1"/>
</dbReference>
<proteinExistence type="evidence at transcript level"/>
<protein>
    <recommendedName>
        <fullName>Zinc transporter ZIP3</fullName>
    </recommendedName>
    <alternativeName>
        <fullName>Solute carrier family 39 member 3</fullName>
    </alternativeName>
    <alternativeName>
        <fullName>Zrt- and Irt-like protein 3</fullName>
        <shortName>ZIP-3</shortName>
    </alternativeName>
</protein>
<evidence type="ECO:0000250" key="1">
    <source>
        <dbReference type="UniProtKB" id="Q5U1X7"/>
    </source>
</evidence>
<evidence type="ECO:0000250" key="2">
    <source>
        <dbReference type="UniProtKB" id="Q99K24"/>
    </source>
</evidence>
<evidence type="ECO:0000250" key="3">
    <source>
        <dbReference type="UniProtKB" id="Q9BRY0"/>
    </source>
</evidence>
<evidence type="ECO:0000255" key="4"/>
<evidence type="ECO:0000305" key="5"/>
<comment type="function">
    <text evidence="2">Transporter for the divalent cation Zn(2+). Mediates the influx of Zn(2+) into cells from extracellular space. Controls Zn(2+) accumulation into dentate gyrus granule cells in the hippocampus. Mediates Zn(2+) reuptake from the secreted milk within the alveolar lumen.</text>
</comment>
<comment type="catalytic activity">
    <reaction evidence="2">
        <text>Zn(2+)(in) = Zn(2+)(out)</text>
        <dbReference type="Rhea" id="RHEA:29351"/>
        <dbReference type="ChEBI" id="CHEBI:29105"/>
    </reaction>
    <physiologicalReaction direction="left-to-right" evidence="2">
        <dbReference type="Rhea" id="RHEA:29352"/>
    </physiologicalReaction>
</comment>
<comment type="subcellular location">
    <subcellularLocation>
        <location evidence="2">Cell membrane</location>
        <topology evidence="4">Multi-pass membrane protein</topology>
    </subcellularLocation>
    <subcellularLocation>
        <location evidence="2">Apical cell membrane</location>
        <topology evidence="4">Multi-pass membrane protein</topology>
    </subcellularLocation>
    <text evidence="2">Localized primarily at the cell surface but also found in a perinuclear compartment in HC11 cells. In mammary epithelial cell, localized primary to the apical membrane.</text>
</comment>
<comment type="similarity">
    <text evidence="5">Belongs to the ZIP transporter (TC 2.A.5) family.</text>
</comment>
<gene>
    <name type="primary">SLC39A3</name>
    <name type="synonym">ZIP3</name>
</gene>
<name>S39A3_BOVIN</name>
<reference key="1">
    <citation type="journal article" date="2005" name="BMC Genomics">
        <title>Characterization of 954 bovine full-CDS cDNA sequences.</title>
        <authorList>
            <person name="Harhay G.P."/>
            <person name="Sonstegard T.S."/>
            <person name="Keele J.W."/>
            <person name="Heaton M.P."/>
            <person name="Clawson M.L."/>
            <person name="Snelling W.M."/>
            <person name="Wiedmann R.T."/>
            <person name="Van Tassell C.P."/>
            <person name="Smith T.P.L."/>
        </authorList>
    </citation>
    <scope>NUCLEOTIDE SEQUENCE [LARGE SCALE MRNA]</scope>
</reference>
<reference key="2">
    <citation type="submission" date="2018-03" db="EMBL/GenBank/DDBJ databases">
        <title>ARS-UCD1.2.</title>
        <authorList>
            <person name="Rosen B.D."/>
            <person name="Bickhart D.M."/>
            <person name="Koren S."/>
            <person name="Schnabel R.D."/>
            <person name="Hall R."/>
            <person name="Zimin A."/>
            <person name="Dreischer C."/>
            <person name="Schultheiss S."/>
            <person name="Schroeder S.G."/>
            <person name="Elsik C.G."/>
            <person name="Couldrey C."/>
            <person name="Liu G.E."/>
            <person name="Van Tassell C.P."/>
            <person name="Phillippy A.M."/>
            <person name="Smith T.P.L."/>
            <person name="Medrano J.F."/>
        </authorList>
    </citation>
    <scope>NUCLEOTIDE SEQUENCE [LARGE SCALE GENOMIC DNA]</scope>
    <source>
        <strain>Hereford</strain>
    </source>
</reference>
<reference key="3">
    <citation type="submission" date="2006-08" db="EMBL/GenBank/DDBJ databases">
        <authorList>
            <consortium name="NIH - Mammalian Gene Collection (MGC) project"/>
        </authorList>
    </citation>
    <scope>NUCLEOTIDE SEQUENCE [LARGE SCALE MRNA]</scope>
    <source>
        <strain>Hereford</strain>
        <tissue>Uterus</tissue>
    </source>
</reference>
<keyword id="KW-1003">Cell membrane</keyword>
<keyword id="KW-0406">Ion transport</keyword>
<keyword id="KW-0472">Membrane</keyword>
<keyword id="KW-0597">Phosphoprotein</keyword>
<keyword id="KW-1185">Reference proteome</keyword>
<keyword id="KW-0812">Transmembrane</keyword>
<keyword id="KW-1133">Transmembrane helix</keyword>
<keyword id="KW-0813">Transport</keyword>
<keyword id="KW-0862">Zinc</keyword>
<keyword id="KW-0864">Zinc transport</keyword>
<organism>
    <name type="scientific">Bos taurus</name>
    <name type="common">Bovine</name>
    <dbReference type="NCBI Taxonomy" id="9913"/>
    <lineage>
        <taxon>Eukaryota</taxon>
        <taxon>Metazoa</taxon>
        <taxon>Chordata</taxon>
        <taxon>Craniata</taxon>
        <taxon>Vertebrata</taxon>
        <taxon>Euteleostomi</taxon>
        <taxon>Mammalia</taxon>
        <taxon>Eutheria</taxon>
        <taxon>Laurasiatheria</taxon>
        <taxon>Artiodactyla</taxon>
        <taxon>Ruminantia</taxon>
        <taxon>Pecora</taxon>
        <taxon>Bovidae</taxon>
        <taxon>Bovinae</taxon>
        <taxon>Bos</taxon>
    </lineage>
</organism>